<comment type="function">
    <text evidence="2">Scytalone dehydratase-like protein; part of the Pks2 gene cluster that mediates the formation of infectious structures (appressoria), enabling these fungi to kill insects faster (PubMed:29958281). The product of the Pks2 gene cluster is different from the one of Pks1 and has still not been identified (PubMed:29958281).</text>
</comment>
<comment type="subunit">
    <text evidence="1">Homotrimer. Each subunit contains an active site, located in the central part of the hydrophobic core of the monomer, which functions independently.</text>
</comment>
<comment type="similarity">
    <text evidence="4">Belongs to the scytalone dehydratase family.</text>
</comment>
<sequence length="744" mass="81966">MGWNQTFLFLAFAATAASSLVGSGTSLQLNGIDYFVSPFSQGKVTNGSVAINTRQNQLGFVPATVIAGDLYTESTLQSLFLNWSTVDDVWQPAFLETIFVFNFAKLTNKNHNYHDGVSSSVFPLQVTHKIPSGPYFLNVHTGEVHPAYRLYDDFAGAFTQSLLQRPDGRFQTLSAQVPAAASITIGVPSRLYFTKTEAKPLAGVRIGVKDIFSLAGVKKGCGNRAWYHLYPVANSTGTAMQNLIDKGAIIVGVQKTSQFANGETPTADWVDYHSPFNPRGDGYQDPATSSAGAGSSIASYEWLDLAVGSDTGGSIRGPATVQGIFGNRPSHGLVSLDNVMPLSPKLDTPGFLARDPCLWNAANAALYRDKYTFFGHQAPRYPKKLYLLDFPAGNTSHAPILQNFVTKLAKFLDTSPTNIDLNKEWERTRPTSAGDQSLAQLLNTTYAAIISKDQAKLVREPFYRDYAAVHDGRLPFVNPVPLARWTWGDSQPSSLLSDAVRNKTLFMDWFNGNILPPSSDPLTCSSGLLLHVNGSADFVSRNRYINPPVPPFGFSNSQISLFAETPDSVFPLGQVPVFSSITNNTEYLPVTIDVVAAKGFQLQRDWARLRAILAPALYVDYTKIGKEKWDAMSADDFMAMVSNDDFLGDPCVKTQHLIGATYWERVSESKVIGHHQLRAAHQVYTSPDLKTVKLRGHSHATNEHYYVKSNGVWKFAGLKPEVRWNEYKFEEVFKGSYTQSEKHS</sequence>
<proteinExistence type="inferred from homology"/>
<evidence type="ECO:0000250" key="1">
    <source>
        <dbReference type="UniProtKB" id="P56221"/>
    </source>
</evidence>
<evidence type="ECO:0000269" key="2">
    <source>
    </source>
</evidence>
<evidence type="ECO:0000303" key="3">
    <source>
    </source>
</evidence>
<evidence type="ECO:0000305" key="4"/>
<evidence type="ECO:0000305" key="5">
    <source>
    </source>
</evidence>
<name>ARP1_METBS</name>
<keyword id="KW-0456">Lyase</keyword>
<feature type="chain" id="PRO_5002089388" description="Scytalone dehydratase-like protein Arp1">
    <location>
        <begin position="1"/>
        <end position="744"/>
    </location>
</feature>
<feature type="active site" evidence="1">
    <location>
        <position position="656"/>
    </location>
</feature>
<feature type="active site" evidence="1">
    <location>
        <position position="681"/>
    </location>
</feature>
<feature type="binding site" evidence="1">
    <location>
        <position position="621"/>
    </location>
    <ligand>
        <name>substrate</name>
    </ligand>
</feature>
<feature type="binding site" evidence="1">
    <location>
        <position position="702"/>
    </location>
    <ligand>
        <name>substrate</name>
    </ligand>
</feature>
<reference key="1">
    <citation type="journal article" date="2014" name="Proc. Natl. Acad. Sci. U.S.A.">
        <title>Trajectory and genomic determinants of fungal-pathogen speciation and host adaptation.</title>
        <authorList>
            <person name="Hu X."/>
            <person name="Xiao G."/>
            <person name="Zheng P."/>
            <person name="Shang Y."/>
            <person name="Su Y."/>
            <person name="Zhang X."/>
            <person name="Liu X."/>
            <person name="Zhan S."/>
            <person name="St Leger R.J."/>
            <person name="Wang C."/>
        </authorList>
    </citation>
    <scope>NUCLEOTIDE SEQUENCE [LARGE SCALE GENOMIC DNA]</scope>
    <source>
        <strain>ARSEF 3297</strain>
    </source>
</reference>
<reference key="2">
    <citation type="journal article" date="2018" name="PLoS Genet.">
        <title>Duplication of a Pks gene cluster and subsequent functional diversification facilitate environmental adaptation in Metarhizium species.</title>
        <authorList>
            <person name="Zeng G."/>
            <person name="Zhang P."/>
            <person name="Zhang Q."/>
            <person name="Zhao H."/>
            <person name="Li Z."/>
            <person name="Zhang X."/>
            <person name="Wang C."/>
            <person name="Yin W.B."/>
            <person name="Fang W."/>
        </authorList>
    </citation>
    <scope>IDENTIFICATION</scope>
    <scope>FUNCTION</scope>
</reference>
<organism>
    <name type="scientific">Metarhizium brunneum (strain ARSEF 3297)</name>
    <dbReference type="NCBI Taxonomy" id="1276141"/>
    <lineage>
        <taxon>Eukaryota</taxon>
        <taxon>Fungi</taxon>
        <taxon>Dikarya</taxon>
        <taxon>Ascomycota</taxon>
        <taxon>Pezizomycotina</taxon>
        <taxon>Sordariomycetes</taxon>
        <taxon>Hypocreomycetidae</taxon>
        <taxon>Hypocreales</taxon>
        <taxon>Clavicipitaceae</taxon>
        <taxon>Metarhizium</taxon>
    </lineage>
</organism>
<accession>A0A0B4GDU5</accession>
<protein>
    <recommendedName>
        <fullName evidence="5">Scytalone dehydratase-like protein Arp1</fullName>
        <ecNumber evidence="5">4.2.1.-</ecNumber>
    </recommendedName>
</protein>
<gene>
    <name evidence="3" type="primary">Arp1</name>
    <name type="ORF">MBR_03976</name>
</gene>
<dbReference type="EC" id="4.2.1.-" evidence="5"/>
<dbReference type="EMBL" id="AZNG01000004">
    <property type="protein sequence ID" value="KID76041.1"/>
    <property type="molecule type" value="Genomic_DNA"/>
</dbReference>
<dbReference type="RefSeq" id="XP_014545213.1">
    <property type="nucleotide sequence ID" value="XM_014689727.1"/>
</dbReference>
<dbReference type="SMR" id="A0A0B4GDU5"/>
<dbReference type="GeneID" id="26241246"/>
<dbReference type="KEGG" id="mbrn:26241246"/>
<dbReference type="HOGENOM" id="CLU_020129_1_0_1"/>
<dbReference type="OrthoDB" id="3334at5529"/>
<dbReference type="GO" id="GO:0016829">
    <property type="term" value="F:lyase activity"/>
    <property type="evidence" value="ECO:0007669"/>
    <property type="project" value="UniProtKB-KW"/>
</dbReference>
<dbReference type="Gene3D" id="3.10.450.50">
    <property type="match status" value="1"/>
</dbReference>
<dbReference type="Gene3D" id="3.90.1300.10">
    <property type="entry name" value="Amidase signature (AS) domain"/>
    <property type="match status" value="1"/>
</dbReference>
<dbReference type="InterPro" id="IPR023631">
    <property type="entry name" value="Amidase_dom"/>
</dbReference>
<dbReference type="InterPro" id="IPR036928">
    <property type="entry name" value="AS_sf"/>
</dbReference>
<dbReference type="InterPro" id="IPR032710">
    <property type="entry name" value="NTF2-like_dom_sf"/>
</dbReference>
<dbReference type="InterPro" id="IPR049884">
    <property type="entry name" value="Scytalone_dh"/>
</dbReference>
<dbReference type="PANTHER" id="PTHR46310">
    <property type="entry name" value="AMIDASE 1"/>
    <property type="match status" value="1"/>
</dbReference>
<dbReference type="PANTHER" id="PTHR46310:SF7">
    <property type="entry name" value="AMIDASE 1"/>
    <property type="match status" value="1"/>
</dbReference>
<dbReference type="Pfam" id="PF01425">
    <property type="entry name" value="Amidase"/>
    <property type="match status" value="1"/>
</dbReference>
<dbReference type="Pfam" id="PF02982">
    <property type="entry name" value="Scytalone_dh"/>
    <property type="match status" value="1"/>
</dbReference>
<dbReference type="SUPFAM" id="SSF75304">
    <property type="entry name" value="Amidase signature (AS) enzymes"/>
    <property type="match status" value="1"/>
</dbReference>
<dbReference type="SUPFAM" id="SSF54427">
    <property type="entry name" value="NTF2-like"/>
    <property type="match status" value="1"/>
</dbReference>